<organism>
    <name type="scientific">Xanthomonas axonopodis pv. citri (strain 306)</name>
    <dbReference type="NCBI Taxonomy" id="190486"/>
    <lineage>
        <taxon>Bacteria</taxon>
        <taxon>Pseudomonadati</taxon>
        <taxon>Pseudomonadota</taxon>
        <taxon>Gammaproteobacteria</taxon>
        <taxon>Lysobacterales</taxon>
        <taxon>Lysobacteraceae</taxon>
        <taxon>Xanthomonas</taxon>
    </lineage>
</organism>
<sequence>MTSYSFTEKKRIRKDFGKQRSILEVPFLLAIQVDSYREFLQEDVEPNKRKDLGLHAALKSVFPISSYSGNAALEYVGYKLGQPVFDERECRQRGMSYGAPLRVTVRLVIYDRESSTKAIKYVKEQEVYLGEIPLMTGNGTFIVNGTERVIVSQLHRSPGVFFDHDRGKTHSSGKLLYSARIIPYRGSWLDFEFDPKDALFTRIDRRRKLPVSILLRALGYSNEEMLAEFFEINTFHINPDEGVQLELVPERLRGETLNFDLADGDKVIVEAGKRITARHVKQLEAAGVAALAVPDDYLVGRILSHDVVDGSTGELLANANDEINEDQLAAFRKAGVDAVGTLWVNDLDRGPYLSNTLRIDPTKTQLEALVEIYRMMRPGEPPTKEAAQNLFHNLFFTFERYDLSTVGRMKFNRRVGRKDVLGESVLYDKKYFAERNDEESKRLVAEHADTSDILEVIKVLTEIRNGRGVVDDIDHLGNRRVRSVGEMAENVFRVGLVRVERAVKERLSMAESEGLTPQELINAKPVAAAIKEFFGSSQLSQFMDQNNPLSEVTHKRRVSALGPGGLTRERAGFEVRDVHPTHYGRVCTIETPEGPNIGLINSLAVFARTNQYGFLETPYRKVLDGKVSDDVEYLSAIEENEYVIAQANALTDAKNMLTEQFVPCRFQGESLLKPPSEVHFMDVSPMQTVSVAAALVPFLEHDDANRALMGANMQRQAVPTLRSQKPLVGTGIERAVARDSGVTVNALRGGVIEQIDAARIVVKVNEAEIGGGTDAGVDIYNLIKYTRSNQNTCINQRPLVNVGDVIARGDVLADGPSTDIGELALGQNMLIAFMPWNGYNFEDSILLSERVVEEDRYTTIHIEELTCVARDTKLGPEEISADIPNVSEQALNRLDESGVVYIGAEVRAGDIMVGKVTPKGESQLTPEEKLLRAIFGEKASDVKDSSLRVPPGMDGTVIDVQVFTRDGIEKDKRARQIEESEIKRVKKDFDDQFRILEAAIYARLRSQIVGKVANGGANLKKGDTVTDAYLDGLKKSDWFQLRMKDEDAADAIERAQKQIQAHEKEFEARFADKRGKITQGDDLAPGVLKMVKVFLAVKRRIQPGDKMAGRHGNKGVVSNVVPVEDMPYMATGESVDIVLNPLGVPSRMNIGQILEVHLGWAAKGLGRKIQRMLEAQAAVSELRKFLNDIYNHDNAINAQRVDLSQFSDEELLNLGKNLIDGVPMATPVFDGASEAEIKRMLELADLPQSGQTQLYDGRTGEAFDRKTTVGYMHYLKLNHLVDDKMHARSTGPYSLVTQQPLGGKAQFGGQRFGEMEVWALEAYGAAYTLQEMLTVKSDDVQGRNQMYKNIVDGEHEMVAGMPESFNVLVKEIRSLAINMELEE</sequence>
<accession>Q8PNT0</accession>
<comment type="function">
    <text evidence="1">DNA-dependent RNA polymerase catalyzes the transcription of DNA into RNA using the four ribonucleoside triphosphates as substrates.</text>
</comment>
<comment type="catalytic activity">
    <reaction evidence="1">
        <text>RNA(n) + a ribonucleoside 5'-triphosphate = RNA(n+1) + diphosphate</text>
        <dbReference type="Rhea" id="RHEA:21248"/>
        <dbReference type="Rhea" id="RHEA-COMP:14527"/>
        <dbReference type="Rhea" id="RHEA-COMP:17342"/>
        <dbReference type="ChEBI" id="CHEBI:33019"/>
        <dbReference type="ChEBI" id="CHEBI:61557"/>
        <dbReference type="ChEBI" id="CHEBI:140395"/>
        <dbReference type="EC" id="2.7.7.6"/>
    </reaction>
</comment>
<comment type="subunit">
    <text evidence="1">The RNAP catalytic core consists of 2 alpha, 1 beta, 1 beta' and 1 omega subunit. When a sigma factor is associated with the core the holoenzyme is formed, which can initiate transcription.</text>
</comment>
<comment type="similarity">
    <text evidence="1">Belongs to the RNA polymerase beta chain family.</text>
</comment>
<proteinExistence type="inferred from homology"/>
<keyword id="KW-0240">DNA-directed RNA polymerase</keyword>
<keyword id="KW-0548">Nucleotidyltransferase</keyword>
<keyword id="KW-0804">Transcription</keyword>
<keyword id="KW-0808">Transferase</keyword>
<reference key="1">
    <citation type="journal article" date="2002" name="Nature">
        <title>Comparison of the genomes of two Xanthomonas pathogens with differing host specificities.</title>
        <authorList>
            <person name="da Silva A.C.R."/>
            <person name="Ferro J.A."/>
            <person name="Reinach F.C."/>
            <person name="Farah C.S."/>
            <person name="Furlan L.R."/>
            <person name="Quaggio R.B."/>
            <person name="Monteiro-Vitorello C.B."/>
            <person name="Van Sluys M.A."/>
            <person name="Almeida N.F. Jr."/>
            <person name="Alves L.M.C."/>
            <person name="do Amaral A.M."/>
            <person name="Bertolini M.C."/>
            <person name="Camargo L.E.A."/>
            <person name="Camarotte G."/>
            <person name="Cannavan F."/>
            <person name="Cardozo J."/>
            <person name="Chambergo F."/>
            <person name="Ciapina L.P."/>
            <person name="Cicarelli R.M.B."/>
            <person name="Coutinho L.L."/>
            <person name="Cursino-Santos J.R."/>
            <person name="El-Dorry H."/>
            <person name="Faria J.B."/>
            <person name="Ferreira A.J.S."/>
            <person name="Ferreira R.C.C."/>
            <person name="Ferro M.I.T."/>
            <person name="Formighieri E.F."/>
            <person name="Franco M.C."/>
            <person name="Greggio C.C."/>
            <person name="Gruber A."/>
            <person name="Katsuyama A.M."/>
            <person name="Kishi L.T."/>
            <person name="Leite R.P."/>
            <person name="Lemos E.G.M."/>
            <person name="Lemos M.V.F."/>
            <person name="Locali E.C."/>
            <person name="Machado M.A."/>
            <person name="Madeira A.M.B.N."/>
            <person name="Martinez-Rossi N.M."/>
            <person name="Martins E.C."/>
            <person name="Meidanis J."/>
            <person name="Menck C.F.M."/>
            <person name="Miyaki C.Y."/>
            <person name="Moon D.H."/>
            <person name="Moreira L.M."/>
            <person name="Novo M.T.M."/>
            <person name="Okura V.K."/>
            <person name="Oliveira M.C."/>
            <person name="Oliveira V.R."/>
            <person name="Pereira H.A."/>
            <person name="Rossi A."/>
            <person name="Sena J.A.D."/>
            <person name="Silva C."/>
            <person name="de Souza R.F."/>
            <person name="Spinola L.A.F."/>
            <person name="Takita M.A."/>
            <person name="Tamura R.E."/>
            <person name="Teixeira E.C."/>
            <person name="Tezza R.I.D."/>
            <person name="Trindade dos Santos M."/>
            <person name="Truffi D."/>
            <person name="Tsai S.M."/>
            <person name="White F.F."/>
            <person name="Setubal J.C."/>
            <person name="Kitajima J.P."/>
        </authorList>
    </citation>
    <scope>NUCLEOTIDE SEQUENCE [LARGE SCALE GENOMIC DNA]</scope>
    <source>
        <strain>306</strain>
    </source>
</reference>
<name>RPOB_XANAC</name>
<gene>
    <name evidence="1" type="primary">rpoB</name>
    <name type="ordered locus">XAC0965</name>
</gene>
<protein>
    <recommendedName>
        <fullName evidence="1">DNA-directed RNA polymerase subunit beta</fullName>
        <shortName evidence="1">RNAP subunit beta</shortName>
        <ecNumber evidence="1">2.7.7.6</ecNumber>
    </recommendedName>
    <alternativeName>
        <fullName evidence="1">RNA polymerase subunit beta</fullName>
    </alternativeName>
    <alternativeName>
        <fullName evidence="1">Transcriptase subunit beta</fullName>
    </alternativeName>
</protein>
<feature type="chain" id="PRO_0000047998" description="DNA-directed RNA polymerase subunit beta">
    <location>
        <begin position="1"/>
        <end position="1383"/>
    </location>
</feature>
<dbReference type="EC" id="2.7.7.6" evidence="1"/>
<dbReference type="EMBL" id="AE008923">
    <property type="protein sequence ID" value="AAM35848.1"/>
    <property type="molecule type" value="Genomic_DNA"/>
</dbReference>
<dbReference type="RefSeq" id="WP_003486738.1">
    <property type="nucleotide sequence ID" value="NC_003919.1"/>
</dbReference>
<dbReference type="SMR" id="Q8PNT0"/>
<dbReference type="GeneID" id="93990186"/>
<dbReference type="KEGG" id="xac:XAC0965"/>
<dbReference type="eggNOG" id="COG0085">
    <property type="taxonomic scope" value="Bacteria"/>
</dbReference>
<dbReference type="HOGENOM" id="CLU_000524_4_3_6"/>
<dbReference type="Proteomes" id="UP000000576">
    <property type="component" value="Chromosome"/>
</dbReference>
<dbReference type="GO" id="GO:0000428">
    <property type="term" value="C:DNA-directed RNA polymerase complex"/>
    <property type="evidence" value="ECO:0007669"/>
    <property type="project" value="UniProtKB-KW"/>
</dbReference>
<dbReference type="GO" id="GO:0003677">
    <property type="term" value="F:DNA binding"/>
    <property type="evidence" value="ECO:0007669"/>
    <property type="project" value="UniProtKB-UniRule"/>
</dbReference>
<dbReference type="GO" id="GO:0003899">
    <property type="term" value="F:DNA-directed RNA polymerase activity"/>
    <property type="evidence" value="ECO:0007669"/>
    <property type="project" value="UniProtKB-UniRule"/>
</dbReference>
<dbReference type="GO" id="GO:0032549">
    <property type="term" value="F:ribonucleoside binding"/>
    <property type="evidence" value="ECO:0007669"/>
    <property type="project" value="InterPro"/>
</dbReference>
<dbReference type="GO" id="GO:0006351">
    <property type="term" value="P:DNA-templated transcription"/>
    <property type="evidence" value="ECO:0007669"/>
    <property type="project" value="UniProtKB-UniRule"/>
</dbReference>
<dbReference type="CDD" id="cd00653">
    <property type="entry name" value="RNA_pol_B_RPB2"/>
    <property type="match status" value="1"/>
</dbReference>
<dbReference type="FunFam" id="2.40.50.100:FF:000006">
    <property type="entry name" value="DNA-directed RNA polymerase subunit beta"/>
    <property type="match status" value="1"/>
</dbReference>
<dbReference type="FunFam" id="2.40.50.150:FF:000001">
    <property type="entry name" value="DNA-directed RNA polymerase subunit beta"/>
    <property type="match status" value="1"/>
</dbReference>
<dbReference type="FunFam" id="3.90.1800.10:FF:000001">
    <property type="entry name" value="DNA-directed RNA polymerase subunit beta"/>
    <property type="match status" value="1"/>
</dbReference>
<dbReference type="Gene3D" id="2.40.50.100">
    <property type="match status" value="1"/>
</dbReference>
<dbReference type="Gene3D" id="2.40.50.150">
    <property type="match status" value="1"/>
</dbReference>
<dbReference type="Gene3D" id="3.90.1100.10">
    <property type="match status" value="2"/>
</dbReference>
<dbReference type="Gene3D" id="2.30.150.10">
    <property type="entry name" value="DNA-directed RNA polymerase, beta subunit, external 1 domain"/>
    <property type="match status" value="1"/>
</dbReference>
<dbReference type="Gene3D" id="2.40.270.10">
    <property type="entry name" value="DNA-directed RNA polymerase, subunit 2, domain 6"/>
    <property type="match status" value="2"/>
</dbReference>
<dbReference type="Gene3D" id="3.90.1800.10">
    <property type="entry name" value="RNA polymerase alpha subunit dimerisation domain"/>
    <property type="match status" value="1"/>
</dbReference>
<dbReference type="Gene3D" id="3.90.1110.10">
    <property type="entry name" value="RNA polymerase Rpb2, domain 2"/>
    <property type="match status" value="2"/>
</dbReference>
<dbReference type="HAMAP" id="MF_01321">
    <property type="entry name" value="RNApol_bact_RpoB"/>
    <property type="match status" value="1"/>
</dbReference>
<dbReference type="InterPro" id="IPR042107">
    <property type="entry name" value="DNA-dir_RNA_pol_bsu_ext_1_sf"/>
</dbReference>
<dbReference type="InterPro" id="IPR019462">
    <property type="entry name" value="DNA-dir_RNA_pol_bsu_external_1"/>
</dbReference>
<dbReference type="InterPro" id="IPR015712">
    <property type="entry name" value="DNA-dir_RNA_pol_su2"/>
</dbReference>
<dbReference type="InterPro" id="IPR007120">
    <property type="entry name" value="DNA-dir_RNAP_su2_dom"/>
</dbReference>
<dbReference type="InterPro" id="IPR037033">
    <property type="entry name" value="DNA-dir_RNAP_su2_hyb_sf"/>
</dbReference>
<dbReference type="InterPro" id="IPR010243">
    <property type="entry name" value="RNA_pol_bsu_bac"/>
</dbReference>
<dbReference type="InterPro" id="IPR007121">
    <property type="entry name" value="RNA_pol_bsu_CS"/>
</dbReference>
<dbReference type="InterPro" id="IPR007644">
    <property type="entry name" value="RNA_pol_bsu_protrusion"/>
</dbReference>
<dbReference type="InterPro" id="IPR007642">
    <property type="entry name" value="RNA_pol_Rpb2_2"/>
</dbReference>
<dbReference type="InterPro" id="IPR037034">
    <property type="entry name" value="RNA_pol_Rpb2_2_sf"/>
</dbReference>
<dbReference type="InterPro" id="IPR007645">
    <property type="entry name" value="RNA_pol_Rpb2_3"/>
</dbReference>
<dbReference type="InterPro" id="IPR007641">
    <property type="entry name" value="RNA_pol_Rpb2_7"/>
</dbReference>
<dbReference type="InterPro" id="IPR014724">
    <property type="entry name" value="RNA_pol_RPB2_OB-fold"/>
</dbReference>
<dbReference type="NCBIfam" id="NF001616">
    <property type="entry name" value="PRK00405.1"/>
    <property type="match status" value="1"/>
</dbReference>
<dbReference type="NCBIfam" id="TIGR02013">
    <property type="entry name" value="rpoB"/>
    <property type="match status" value="1"/>
</dbReference>
<dbReference type="PANTHER" id="PTHR20856">
    <property type="entry name" value="DNA-DIRECTED RNA POLYMERASE I SUBUNIT 2"/>
    <property type="match status" value="1"/>
</dbReference>
<dbReference type="Pfam" id="PF04563">
    <property type="entry name" value="RNA_pol_Rpb2_1"/>
    <property type="match status" value="1"/>
</dbReference>
<dbReference type="Pfam" id="PF04561">
    <property type="entry name" value="RNA_pol_Rpb2_2"/>
    <property type="match status" value="3"/>
</dbReference>
<dbReference type="Pfam" id="PF04565">
    <property type="entry name" value="RNA_pol_Rpb2_3"/>
    <property type="match status" value="1"/>
</dbReference>
<dbReference type="Pfam" id="PF10385">
    <property type="entry name" value="RNA_pol_Rpb2_45"/>
    <property type="match status" value="1"/>
</dbReference>
<dbReference type="Pfam" id="PF00562">
    <property type="entry name" value="RNA_pol_Rpb2_6"/>
    <property type="match status" value="1"/>
</dbReference>
<dbReference type="Pfam" id="PF04560">
    <property type="entry name" value="RNA_pol_Rpb2_7"/>
    <property type="match status" value="1"/>
</dbReference>
<dbReference type="SUPFAM" id="SSF64484">
    <property type="entry name" value="beta and beta-prime subunits of DNA dependent RNA-polymerase"/>
    <property type="match status" value="1"/>
</dbReference>
<dbReference type="PROSITE" id="PS01166">
    <property type="entry name" value="RNA_POL_BETA"/>
    <property type="match status" value="1"/>
</dbReference>
<evidence type="ECO:0000255" key="1">
    <source>
        <dbReference type="HAMAP-Rule" id="MF_01321"/>
    </source>
</evidence>